<evidence type="ECO:0000255" key="1">
    <source>
        <dbReference type="HAMAP-Rule" id="MF_00042"/>
    </source>
</evidence>
<evidence type="ECO:0000255" key="2">
    <source>
        <dbReference type="PROSITE-ProRule" id="PRU00408"/>
    </source>
</evidence>
<protein>
    <recommendedName>
        <fullName evidence="1">Ribonuclease H</fullName>
        <shortName evidence="1">RNase H</shortName>
        <ecNumber evidence="1">3.1.26.4</ecNumber>
    </recommendedName>
</protein>
<sequence>MLKQVEIFTDGSCLGNPGPGGYGAILRYRGREKTFSAGYTRTTNNRMELMAAIVALEALKEHCEVILSTDSQYVRQGITQWIHNWKKRGWKTADKKPVKNVDLWQRLDAALGQHQIKWEWVKGHAGHPENERCDELARAAAMNPTLEDTGYQVEV</sequence>
<gene>
    <name evidence="1" type="primary">rnhA</name>
    <name type="ordered locus">ECS88_0229</name>
</gene>
<feature type="chain" id="PRO_1000116577" description="Ribonuclease H">
    <location>
        <begin position="1"/>
        <end position="155"/>
    </location>
</feature>
<feature type="domain" description="RNase H type-1" evidence="2">
    <location>
        <begin position="1"/>
        <end position="142"/>
    </location>
</feature>
<feature type="binding site" evidence="1">
    <location>
        <position position="10"/>
    </location>
    <ligand>
        <name>Mg(2+)</name>
        <dbReference type="ChEBI" id="CHEBI:18420"/>
        <label>1</label>
    </ligand>
</feature>
<feature type="binding site" evidence="1">
    <location>
        <position position="10"/>
    </location>
    <ligand>
        <name>Mg(2+)</name>
        <dbReference type="ChEBI" id="CHEBI:18420"/>
        <label>2</label>
    </ligand>
</feature>
<feature type="binding site" evidence="1">
    <location>
        <position position="48"/>
    </location>
    <ligand>
        <name>Mg(2+)</name>
        <dbReference type="ChEBI" id="CHEBI:18420"/>
        <label>1</label>
    </ligand>
</feature>
<feature type="binding site" evidence="1">
    <location>
        <position position="70"/>
    </location>
    <ligand>
        <name>Mg(2+)</name>
        <dbReference type="ChEBI" id="CHEBI:18420"/>
        <label>1</label>
    </ligand>
</feature>
<feature type="binding site" evidence="1">
    <location>
        <position position="134"/>
    </location>
    <ligand>
        <name>Mg(2+)</name>
        <dbReference type="ChEBI" id="CHEBI:18420"/>
        <label>2</label>
    </ligand>
</feature>
<keyword id="KW-0963">Cytoplasm</keyword>
<keyword id="KW-0255">Endonuclease</keyword>
<keyword id="KW-0378">Hydrolase</keyword>
<keyword id="KW-0460">Magnesium</keyword>
<keyword id="KW-0479">Metal-binding</keyword>
<keyword id="KW-0540">Nuclease</keyword>
<keyword id="KW-1185">Reference proteome</keyword>
<proteinExistence type="inferred from homology"/>
<organism>
    <name type="scientific">Escherichia coli O45:K1 (strain S88 / ExPEC)</name>
    <dbReference type="NCBI Taxonomy" id="585035"/>
    <lineage>
        <taxon>Bacteria</taxon>
        <taxon>Pseudomonadati</taxon>
        <taxon>Pseudomonadota</taxon>
        <taxon>Gammaproteobacteria</taxon>
        <taxon>Enterobacterales</taxon>
        <taxon>Enterobacteriaceae</taxon>
        <taxon>Escherichia</taxon>
    </lineage>
</organism>
<dbReference type="EC" id="3.1.26.4" evidence="1"/>
<dbReference type="EMBL" id="CU928161">
    <property type="protein sequence ID" value="CAR01584.1"/>
    <property type="molecule type" value="Genomic_DNA"/>
</dbReference>
<dbReference type="RefSeq" id="WP_000917883.1">
    <property type="nucleotide sequence ID" value="NC_011742.1"/>
</dbReference>
<dbReference type="SMR" id="B7MBJ0"/>
<dbReference type="GeneID" id="93777209"/>
<dbReference type="KEGG" id="ecz:ECS88_0229"/>
<dbReference type="HOGENOM" id="CLU_030894_6_0_6"/>
<dbReference type="Proteomes" id="UP000000747">
    <property type="component" value="Chromosome"/>
</dbReference>
<dbReference type="GO" id="GO:0005737">
    <property type="term" value="C:cytoplasm"/>
    <property type="evidence" value="ECO:0007669"/>
    <property type="project" value="UniProtKB-SubCell"/>
</dbReference>
<dbReference type="GO" id="GO:0000287">
    <property type="term" value="F:magnesium ion binding"/>
    <property type="evidence" value="ECO:0007669"/>
    <property type="project" value="UniProtKB-UniRule"/>
</dbReference>
<dbReference type="GO" id="GO:0003676">
    <property type="term" value="F:nucleic acid binding"/>
    <property type="evidence" value="ECO:0007669"/>
    <property type="project" value="InterPro"/>
</dbReference>
<dbReference type="GO" id="GO:0004523">
    <property type="term" value="F:RNA-DNA hybrid ribonuclease activity"/>
    <property type="evidence" value="ECO:0007669"/>
    <property type="project" value="UniProtKB-UniRule"/>
</dbReference>
<dbReference type="GO" id="GO:0043137">
    <property type="term" value="P:DNA replication, removal of RNA primer"/>
    <property type="evidence" value="ECO:0007669"/>
    <property type="project" value="TreeGrafter"/>
</dbReference>
<dbReference type="CDD" id="cd09278">
    <property type="entry name" value="RNase_HI_prokaryote_like"/>
    <property type="match status" value="1"/>
</dbReference>
<dbReference type="FunFam" id="3.30.420.10:FF:000008">
    <property type="entry name" value="Ribonuclease H"/>
    <property type="match status" value="1"/>
</dbReference>
<dbReference type="Gene3D" id="3.30.420.10">
    <property type="entry name" value="Ribonuclease H-like superfamily/Ribonuclease H"/>
    <property type="match status" value="1"/>
</dbReference>
<dbReference type="HAMAP" id="MF_00042">
    <property type="entry name" value="RNase_H"/>
    <property type="match status" value="1"/>
</dbReference>
<dbReference type="InterPro" id="IPR050092">
    <property type="entry name" value="RNase_H"/>
</dbReference>
<dbReference type="InterPro" id="IPR012337">
    <property type="entry name" value="RNaseH-like_sf"/>
</dbReference>
<dbReference type="InterPro" id="IPR002156">
    <property type="entry name" value="RNaseH_domain"/>
</dbReference>
<dbReference type="InterPro" id="IPR036397">
    <property type="entry name" value="RNaseH_sf"/>
</dbReference>
<dbReference type="InterPro" id="IPR022892">
    <property type="entry name" value="RNaseHI"/>
</dbReference>
<dbReference type="NCBIfam" id="NF001236">
    <property type="entry name" value="PRK00203.1"/>
    <property type="match status" value="1"/>
</dbReference>
<dbReference type="PANTHER" id="PTHR10642">
    <property type="entry name" value="RIBONUCLEASE H1"/>
    <property type="match status" value="1"/>
</dbReference>
<dbReference type="PANTHER" id="PTHR10642:SF26">
    <property type="entry name" value="RIBONUCLEASE H1"/>
    <property type="match status" value="1"/>
</dbReference>
<dbReference type="Pfam" id="PF00075">
    <property type="entry name" value="RNase_H"/>
    <property type="match status" value="1"/>
</dbReference>
<dbReference type="SUPFAM" id="SSF53098">
    <property type="entry name" value="Ribonuclease H-like"/>
    <property type="match status" value="1"/>
</dbReference>
<dbReference type="PROSITE" id="PS50879">
    <property type="entry name" value="RNASE_H_1"/>
    <property type="match status" value="1"/>
</dbReference>
<name>RNH_ECO45</name>
<reference key="1">
    <citation type="journal article" date="2009" name="PLoS Genet.">
        <title>Organised genome dynamics in the Escherichia coli species results in highly diverse adaptive paths.</title>
        <authorList>
            <person name="Touchon M."/>
            <person name="Hoede C."/>
            <person name="Tenaillon O."/>
            <person name="Barbe V."/>
            <person name="Baeriswyl S."/>
            <person name="Bidet P."/>
            <person name="Bingen E."/>
            <person name="Bonacorsi S."/>
            <person name="Bouchier C."/>
            <person name="Bouvet O."/>
            <person name="Calteau A."/>
            <person name="Chiapello H."/>
            <person name="Clermont O."/>
            <person name="Cruveiller S."/>
            <person name="Danchin A."/>
            <person name="Diard M."/>
            <person name="Dossat C."/>
            <person name="Karoui M.E."/>
            <person name="Frapy E."/>
            <person name="Garry L."/>
            <person name="Ghigo J.M."/>
            <person name="Gilles A.M."/>
            <person name="Johnson J."/>
            <person name="Le Bouguenec C."/>
            <person name="Lescat M."/>
            <person name="Mangenot S."/>
            <person name="Martinez-Jehanne V."/>
            <person name="Matic I."/>
            <person name="Nassif X."/>
            <person name="Oztas S."/>
            <person name="Petit M.A."/>
            <person name="Pichon C."/>
            <person name="Rouy Z."/>
            <person name="Ruf C.S."/>
            <person name="Schneider D."/>
            <person name="Tourret J."/>
            <person name="Vacherie B."/>
            <person name="Vallenet D."/>
            <person name="Medigue C."/>
            <person name="Rocha E.P.C."/>
            <person name="Denamur E."/>
        </authorList>
    </citation>
    <scope>NUCLEOTIDE SEQUENCE [LARGE SCALE GENOMIC DNA]</scope>
    <source>
        <strain>S88 / ExPEC</strain>
    </source>
</reference>
<accession>B7MBJ0</accession>
<comment type="function">
    <text evidence="1">Endonuclease that specifically degrades the RNA of RNA-DNA hybrids.</text>
</comment>
<comment type="catalytic activity">
    <reaction evidence="1">
        <text>Endonucleolytic cleavage to 5'-phosphomonoester.</text>
        <dbReference type="EC" id="3.1.26.4"/>
    </reaction>
</comment>
<comment type="cofactor">
    <cofactor evidence="1">
        <name>Mg(2+)</name>
        <dbReference type="ChEBI" id="CHEBI:18420"/>
    </cofactor>
    <text evidence="1">Binds 1 Mg(2+) ion per subunit. May bind a second metal ion at a regulatory site, or after substrate binding.</text>
</comment>
<comment type="subunit">
    <text evidence="1">Monomer.</text>
</comment>
<comment type="subcellular location">
    <subcellularLocation>
        <location evidence="1">Cytoplasm</location>
    </subcellularLocation>
</comment>
<comment type="similarity">
    <text evidence="1">Belongs to the RNase H family.</text>
</comment>